<organism>
    <name type="scientific">Mesorhizobium japonicum (strain LMG 29417 / CECT 9101 / MAFF 303099)</name>
    <name type="common">Mesorhizobium loti (strain MAFF 303099)</name>
    <dbReference type="NCBI Taxonomy" id="266835"/>
    <lineage>
        <taxon>Bacteria</taxon>
        <taxon>Pseudomonadati</taxon>
        <taxon>Pseudomonadota</taxon>
        <taxon>Alphaproteobacteria</taxon>
        <taxon>Hyphomicrobiales</taxon>
        <taxon>Phyllobacteriaceae</taxon>
        <taxon>Mesorhizobium</taxon>
    </lineage>
</organism>
<dbReference type="EC" id="2.4.2.-" evidence="1"/>
<dbReference type="EC" id="2.4.2.22" evidence="1"/>
<dbReference type="EMBL" id="BA000012">
    <property type="protein sequence ID" value="BAB47788.1"/>
    <property type="molecule type" value="Genomic_DNA"/>
</dbReference>
<dbReference type="RefSeq" id="WP_010909158.1">
    <property type="nucleotide sequence ID" value="NC_002678.2"/>
</dbReference>
<dbReference type="SMR" id="Q98NH3"/>
<dbReference type="GeneID" id="66684336"/>
<dbReference type="KEGG" id="mlo:mll0141"/>
<dbReference type="eggNOG" id="COG2236">
    <property type="taxonomic scope" value="Bacteria"/>
</dbReference>
<dbReference type="HOGENOM" id="CLU_080904_3_0_5"/>
<dbReference type="UniPathway" id="UPA00602">
    <property type="reaction ID" value="UER00658"/>
</dbReference>
<dbReference type="UniPathway" id="UPA00909">
    <property type="reaction ID" value="UER00887"/>
</dbReference>
<dbReference type="Proteomes" id="UP000000552">
    <property type="component" value="Chromosome"/>
</dbReference>
<dbReference type="GO" id="GO:0005886">
    <property type="term" value="C:plasma membrane"/>
    <property type="evidence" value="ECO:0007669"/>
    <property type="project" value="UniProtKB-SubCell"/>
</dbReference>
<dbReference type="GO" id="GO:0052657">
    <property type="term" value="F:guanine phosphoribosyltransferase activity"/>
    <property type="evidence" value="ECO:0007669"/>
    <property type="project" value="RHEA"/>
</dbReference>
<dbReference type="GO" id="GO:0004422">
    <property type="term" value="F:hypoxanthine phosphoribosyltransferase activity"/>
    <property type="evidence" value="ECO:0007669"/>
    <property type="project" value="RHEA"/>
</dbReference>
<dbReference type="GO" id="GO:0000287">
    <property type="term" value="F:magnesium ion binding"/>
    <property type="evidence" value="ECO:0007669"/>
    <property type="project" value="UniProtKB-UniRule"/>
</dbReference>
<dbReference type="GO" id="GO:0000310">
    <property type="term" value="F:xanthine phosphoribosyltransferase activity"/>
    <property type="evidence" value="ECO:0007669"/>
    <property type="project" value="UniProtKB-UniRule"/>
</dbReference>
<dbReference type="GO" id="GO:0032263">
    <property type="term" value="P:GMP salvage"/>
    <property type="evidence" value="ECO:0007669"/>
    <property type="project" value="UniProtKB-UniRule"/>
</dbReference>
<dbReference type="GO" id="GO:0006166">
    <property type="term" value="P:purine ribonucleoside salvage"/>
    <property type="evidence" value="ECO:0007669"/>
    <property type="project" value="UniProtKB-KW"/>
</dbReference>
<dbReference type="GO" id="GO:0032265">
    <property type="term" value="P:XMP salvage"/>
    <property type="evidence" value="ECO:0007669"/>
    <property type="project" value="UniProtKB-UniRule"/>
</dbReference>
<dbReference type="CDD" id="cd06223">
    <property type="entry name" value="PRTases_typeI"/>
    <property type="match status" value="1"/>
</dbReference>
<dbReference type="Gene3D" id="3.40.50.2020">
    <property type="match status" value="1"/>
</dbReference>
<dbReference type="HAMAP" id="MF_01903">
    <property type="entry name" value="XGPRT"/>
    <property type="match status" value="1"/>
</dbReference>
<dbReference type="InterPro" id="IPR000836">
    <property type="entry name" value="PRibTrfase_dom"/>
</dbReference>
<dbReference type="InterPro" id="IPR029057">
    <property type="entry name" value="PRTase-like"/>
</dbReference>
<dbReference type="InterPro" id="IPR023747">
    <property type="entry name" value="Xanthine_Guanine_PRibTrfase"/>
</dbReference>
<dbReference type="NCBIfam" id="NF006613">
    <property type="entry name" value="PRK09177.1"/>
    <property type="match status" value="1"/>
</dbReference>
<dbReference type="PANTHER" id="PTHR39563">
    <property type="entry name" value="XANTHINE PHOSPHORIBOSYLTRANSFERASE"/>
    <property type="match status" value="1"/>
</dbReference>
<dbReference type="PANTHER" id="PTHR39563:SF1">
    <property type="entry name" value="XANTHINE-GUANINE PHOSPHORIBOSYLTRANSFERASE"/>
    <property type="match status" value="1"/>
</dbReference>
<dbReference type="Pfam" id="PF00156">
    <property type="entry name" value="Pribosyltran"/>
    <property type="match status" value="1"/>
</dbReference>
<dbReference type="SUPFAM" id="SSF53271">
    <property type="entry name" value="PRTase-like"/>
    <property type="match status" value="1"/>
</dbReference>
<reference key="1">
    <citation type="journal article" date="2000" name="DNA Res.">
        <title>Complete genome structure of the nitrogen-fixing symbiotic bacterium Mesorhizobium loti.</title>
        <authorList>
            <person name="Kaneko T."/>
            <person name="Nakamura Y."/>
            <person name="Sato S."/>
            <person name="Asamizu E."/>
            <person name="Kato T."/>
            <person name="Sasamoto S."/>
            <person name="Watanabe A."/>
            <person name="Idesawa K."/>
            <person name="Ishikawa A."/>
            <person name="Kawashima K."/>
            <person name="Kimura T."/>
            <person name="Kishida Y."/>
            <person name="Kiyokawa C."/>
            <person name="Kohara M."/>
            <person name="Matsumoto M."/>
            <person name="Matsuno A."/>
            <person name="Mochizuki Y."/>
            <person name="Nakayama S."/>
            <person name="Nakazaki N."/>
            <person name="Shimpo S."/>
            <person name="Sugimoto M."/>
            <person name="Takeuchi C."/>
            <person name="Yamada M."/>
            <person name="Tabata S."/>
        </authorList>
    </citation>
    <scope>NUCLEOTIDE SEQUENCE [LARGE SCALE GENOMIC DNA]</scope>
    <source>
        <strain>LMG 29417 / CECT 9101 / MAFF 303099</strain>
    </source>
</reference>
<sequence>MSLPEKAFPVSWDQFHRDARALSWRLSGANKGQWKAIVCITRGGLVPAAIIARELGIRVIETVCVASYHDYTSQGQLQVLKEITPALLADDGAGVLIIDDLTDTGKTAGIVRAMMPKAHFATVYAKPKGRPLVDTFVTEVSQDTWIYFPWDMGFTYQKPIADDHAG</sequence>
<keyword id="KW-0997">Cell inner membrane</keyword>
<keyword id="KW-1003">Cell membrane</keyword>
<keyword id="KW-0328">Glycosyltransferase</keyword>
<keyword id="KW-0460">Magnesium</keyword>
<keyword id="KW-0472">Membrane</keyword>
<keyword id="KW-0479">Metal-binding</keyword>
<keyword id="KW-0660">Purine salvage</keyword>
<keyword id="KW-0808">Transferase</keyword>
<feature type="chain" id="PRO_0000139680" description="Xanthine-guanine phosphoribosyltransferase">
    <location>
        <begin position="1"/>
        <end position="166"/>
    </location>
</feature>
<feature type="binding site" evidence="1">
    <location>
        <begin position="42"/>
        <end position="43"/>
    </location>
    <ligand>
        <name>5-phospho-alpha-D-ribose 1-diphosphate</name>
        <dbReference type="ChEBI" id="CHEBI:58017"/>
    </ligand>
</feature>
<feature type="binding site" evidence="1">
    <location>
        <begin position="99"/>
        <end position="107"/>
    </location>
    <ligand>
        <name>5-phospho-alpha-D-ribose 1-diphosphate</name>
        <dbReference type="ChEBI" id="CHEBI:58017"/>
    </ligand>
</feature>
<feature type="binding site" evidence="1">
    <location>
        <position position="100"/>
    </location>
    <ligand>
        <name>Mg(2+)</name>
        <dbReference type="ChEBI" id="CHEBI:18420"/>
    </ligand>
</feature>
<feature type="binding site" evidence="1">
    <location>
        <begin position="103"/>
        <end position="107"/>
    </location>
    <ligand>
        <name>GMP</name>
        <dbReference type="ChEBI" id="CHEBI:58115"/>
    </ligand>
</feature>
<feature type="binding site" evidence="1">
    <location>
        <position position="103"/>
    </location>
    <ligand>
        <name>guanine</name>
        <dbReference type="ChEBI" id="CHEBI:16235"/>
    </ligand>
</feature>
<feature type="binding site" evidence="1">
    <location>
        <position position="103"/>
    </location>
    <ligand>
        <name>xanthine</name>
        <dbReference type="ChEBI" id="CHEBI:17712"/>
    </ligand>
</feature>
<feature type="binding site" evidence="1">
    <location>
        <begin position="145"/>
        <end position="146"/>
    </location>
    <ligand>
        <name>GMP</name>
        <dbReference type="ChEBI" id="CHEBI:58115"/>
    </ligand>
</feature>
<feature type="binding site" evidence="1">
    <location>
        <position position="146"/>
    </location>
    <ligand>
        <name>guanine</name>
        <dbReference type="ChEBI" id="CHEBI:16235"/>
    </ligand>
</feature>
<feature type="binding site" evidence="1">
    <location>
        <position position="146"/>
    </location>
    <ligand>
        <name>xanthine</name>
        <dbReference type="ChEBI" id="CHEBI:17712"/>
    </ligand>
</feature>
<name>XGPT_RHILO</name>
<accession>Q98NH3</accession>
<comment type="function">
    <text evidence="1">Purine salvage pathway enzyme that catalyzes the transfer of the ribosyl-5-phosphate group from 5-phospho-alpha-D-ribose 1-diphosphate (PRPP) to the N9 position of the 6-oxopurines guanine and xanthine to form the corresponding ribonucleotides GMP (guanosine 5'-monophosphate) and XMP (xanthosine 5'-monophosphate), with the release of PPi. To a lesser extent, also acts on hypoxanthine.</text>
</comment>
<comment type="catalytic activity">
    <reaction evidence="1">
        <text>GMP + diphosphate = guanine + 5-phospho-alpha-D-ribose 1-diphosphate</text>
        <dbReference type="Rhea" id="RHEA:25424"/>
        <dbReference type="ChEBI" id="CHEBI:16235"/>
        <dbReference type="ChEBI" id="CHEBI:33019"/>
        <dbReference type="ChEBI" id="CHEBI:58017"/>
        <dbReference type="ChEBI" id="CHEBI:58115"/>
    </reaction>
    <physiologicalReaction direction="right-to-left" evidence="1">
        <dbReference type="Rhea" id="RHEA:25426"/>
    </physiologicalReaction>
</comment>
<comment type="catalytic activity">
    <reaction evidence="1">
        <text>XMP + diphosphate = xanthine + 5-phospho-alpha-D-ribose 1-diphosphate</text>
        <dbReference type="Rhea" id="RHEA:10800"/>
        <dbReference type="ChEBI" id="CHEBI:17712"/>
        <dbReference type="ChEBI" id="CHEBI:33019"/>
        <dbReference type="ChEBI" id="CHEBI:57464"/>
        <dbReference type="ChEBI" id="CHEBI:58017"/>
        <dbReference type="EC" id="2.4.2.22"/>
    </reaction>
    <physiologicalReaction direction="right-to-left" evidence="1">
        <dbReference type="Rhea" id="RHEA:10802"/>
    </physiologicalReaction>
</comment>
<comment type="catalytic activity">
    <reaction evidence="1">
        <text>IMP + diphosphate = hypoxanthine + 5-phospho-alpha-D-ribose 1-diphosphate</text>
        <dbReference type="Rhea" id="RHEA:17973"/>
        <dbReference type="ChEBI" id="CHEBI:17368"/>
        <dbReference type="ChEBI" id="CHEBI:33019"/>
        <dbReference type="ChEBI" id="CHEBI:58017"/>
        <dbReference type="ChEBI" id="CHEBI:58053"/>
    </reaction>
    <physiologicalReaction direction="right-to-left" evidence="1">
        <dbReference type="Rhea" id="RHEA:17975"/>
    </physiologicalReaction>
</comment>
<comment type="cofactor">
    <cofactor evidence="1">
        <name>Mg(2+)</name>
        <dbReference type="ChEBI" id="CHEBI:18420"/>
    </cofactor>
</comment>
<comment type="pathway">
    <text evidence="1">Purine metabolism; GMP biosynthesis via salvage pathway; GMP from guanine: step 1/1.</text>
</comment>
<comment type="pathway">
    <text evidence="1">Purine metabolism; XMP biosynthesis via salvage pathway; XMP from xanthine: step 1/1.</text>
</comment>
<comment type="subunit">
    <text evidence="1">Homotetramer.</text>
</comment>
<comment type="subcellular location">
    <subcellularLocation>
        <location evidence="1">Cell inner membrane</location>
        <topology evidence="1">Peripheral membrane protein</topology>
    </subcellularLocation>
</comment>
<comment type="similarity">
    <text evidence="1">Belongs to the purine/pyrimidine phosphoribosyltransferase family. XGPT subfamily.</text>
</comment>
<gene>
    <name evidence="1" type="primary">gpt</name>
    <name type="ordered locus">mll0141</name>
</gene>
<evidence type="ECO:0000255" key="1">
    <source>
        <dbReference type="HAMAP-Rule" id="MF_01903"/>
    </source>
</evidence>
<proteinExistence type="inferred from homology"/>
<protein>
    <recommendedName>
        <fullName evidence="1">Xanthine-guanine phosphoribosyltransferase</fullName>
        <shortName evidence="1">XGPRT</shortName>
        <ecNumber evidence="1">2.4.2.-</ecNumber>
        <ecNumber evidence="1">2.4.2.22</ecNumber>
    </recommendedName>
    <alternativeName>
        <fullName evidence="1">Xanthine phosphoribosyltransferase</fullName>
    </alternativeName>
</protein>